<feature type="chain" id="PRO_1000069413" description="6-phosphogluconolactonase">
    <location>
        <begin position="1"/>
        <end position="334"/>
    </location>
</feature>
<accession>A7FKN1</accession>
<reference key="1">
    <citation type="journal article" date="2007" name="PLoS Genet.">
        <title>The complete genome sequence of Yersinia pseudotuberculosis IP31758, the causative agent of Far East scarlet-like fever.</title>
        <authorList>
            <person name="Eppinger M."/>
            <person name="Rosovitz M.J."/>
            <person name="Fricke W.F."/>
            <person name="Rasko D.A."/>
            <person name="Kokorina G."/>
            <person name="Fayolle C."/>
            <person name="Lindler L.E."/>
            <person name="Carniel E."/>
            <person name="Ravel J."/>
        </authorList>
    </citation>
    <scope>NUCLEOTIDE SEQUENCE [LARGE SCALE GENOMIC DNA]</scope>
    <source>
        <strain>IP 31758</strain>
    </source>
</reference>
<keyword id="KW-0119">Carbohydrate metabolism</keyword>
<keyword id="KW-0313">Glucose metabolism</keyword>
<keyword id="KW-0378">Hydrolase</keyword>
<comment type="function">
    <text evidence="1">Catalyzes the hydrolysis of 6-phosphogluconolactone to 6-phosphogluconate.</text>
</comment>
<comment type="catalytic activity">
    <reaction evidence="1">
        <text>6-phospho-D-glucono-1,5-lactone + H2O = 6-phospho-D-gluconate + H(+)</text>
        <dbReference type="Rhea" id="RHEA:12556"/>
        <dbReference type="ChEBI" id="CHEBI:15377"/>
        <dbReference type="ChEBI" id="CHEBI:15378"/>
        <dbReference type="ChEBI" id="CHEBI:57955"/>
        <dbReference type="ChEBI" id="CHEBI:58759"/>
        <dbReference type="EC" id="3.1.1.31"/>
    </reaction>
</comment>
<comment type="pathway">
    <text evidence="1">Carbohydrate degradation; pentose phosphate pathway; D-ribulose 5-phosphate from D-glucose 6-phosphate (oxidative stage): step 2/3.</text>
</comment>
<comment type="similarity">
    <text evidence="1">Belongs to the cycloisomerase 2 family.</text>
</comment>
<evidence type="ECO:0000255" key="1">
    <source>
        <dbReference type="HAMAP-Rule" id="MF_01605"/>
    </source>
</evidence>
<sequence>MKQAVYVASPDSQQIHVWQLDSAGELTLLQTVDVPGQVQPMAISPNQRHLYVGVRPDFGIVSYHIADDGTLTAAGMAPLPGSPTHIDTDRQGRFLFSASYSFNCVSISPIDTHGVVQAPIQQLDDLPAPHSANIDPTNQILLVPCLKEDKVRLFDLSAEGQLTPHAQADITVAAGAGPRHMAFHPNHQVAYCVNELNSSVDVYQISNNGQEYHLVQSLDAMPADFTGTRWAADIHITPNGRYLYISDRTANLLGIFTVSEDGRVISLVGHHLTEAQPRGFNIDHSGNFLIASGQKSDHIEVYRIDQNTGELTTLKRYPVGKGPMWVSIRGAQNS</sequence>
<gene>
    <name evidence="1" type="primary">pgl</name>
    <name type="ordered locus">YpsIP31758_2846</name>
</gene>
<dbReference type="EC" id="3.1.1.31" evidence="1"/>
<dbReference type="EMBL" id="CP000720">
    <property type="protein sequence ID" value="ABS47794.1"/>
    <property type="molecule type" value="Genomic_DNA"/>
</dbReference>
<dbReference type="RefSeq" id="WP_002210760.1">
    <property type="nucleotide sequence ID" value="NC_009708.1"/>
</dbReference>
<dbReference type="SMR" id="A7FKN1"/>
<dbReference type="GeneID" id="57977288"/>
<dbReference type="KEGG" id="ypi:YpsIP31758_2846"/>
<dbReference type="HOGENOM" id="CLU_038716_2_0_6"/>
<dbReference type="UniPathway" id="UPA00115">
    <property type="reaction ID" value="UER00409"/>
</dbReference>
<dbReference type="Proteomes" id="UP000002412">
    <property type="component" value="Chromosome"/>
</dbReference>
<dbReference type="GO" id="GO:0005829">
    <property type="term" value="C:cytosol"/>
    <property type="evidence" value="ECO:0007669"/>
    <property type="project" value="TreeGrafter"/>
</dbReference>
<dbReference type="GO" id="GO:0017057">
    <property type="term" value="F:6-phosphogluconolactonase activity"/>
    <property type="evidence" value="ECO:0007669"/>
    <property type="project" value="UniProtKB-UniRule"/>
</dbReference>
<dbReference type="GO" id="GO:0006006">
    <property type="term" value="P:glucose metabolic process"/>
    <property type="evidence" value="ECO:0007669"/>
    <property type="project" value="UniProtKB-KW"/>
</dbReference>
<dbReference type="GO" id="GO:0009051">
    <property type="term" value="P:pentose-phosphate shunt, oxidative branch"/>
    <property type="evidence" value="ECO:0007669"/>
    <property type="project" value="UniProtKB-UniRule"/>
</dbReference>
<dbReference type="FunFam" id="2.130.10.10:FF:000051">
    <property type="entry name" value="6-phosphogluconolactonase"/>
    <property type="match status" value="1"/>
</dbReference>
<dbReference type="Gene3D" id="2.130.10.10">
    <property type="entry name" value="YVTN repeat-like/Quinoprotein amine dehydrogenase"/>
    <property type="match status" value="1"/>
</dbReference>
<dbReference type="HAMAP" id="MF_01605">
    <property type="entry name" value="6P_gluconolactonase"/>
    <property type="match status" value="1"/>
</dbReference>
<dbReference type="InterPro" id="IPR022528">
    <property type="entry name" value="6-phosphogluconolactonase_YbhE"/>
</dbReference>
<dbReference type="InterPro" id="IPR050282">
    <property type="entry name" value="Cycloisomerase_2"/>
</dbReference>
<dbReference type="InterPro" id="IPR019405">
    <property type="entry name" value="Lactonase_7-beta_prop"/>
</dbReference>
<dbReference type="InterPro" id="IPR011045">
    <property type="entry name" value="N2O_reductase_N"/>
</dbReference>
<dbReference type="InterPro" id="IPR015943">
    <property type="entry name" value="WD40/YVTN_repeat-like_dom_sf"/>
</dbReference>
<dbReference type="NCBIfam" id="NF008258">
    <property type="entry name" value="PRK11028.1"/>
    <property type="match status" value="1"/>
</dbReference>
<dbReference type="PANTHER" id="PTHR30344:SF1">
    <property type="entry name" value="6-PHOSPHOGLUCONOLACTONASE"/>
    <property type="match status" value="1"/>
</dbReference>
<dbReference type="PANTHER" id="PTHR30344">
    <property type="entry name" value="6-PHOSPHOGLUCONOLACTONASE-RELATED"/>
    <property type="match status" value="1"/>
</dbReference>
<dbReference type="Pfam" id="PF10282">
    <property type="entry name" value="Lactonase"/>
    <property type="match status" value="1"/>
</dbReference>
<dbReference type="SUPFAM" id="SSF50974">
    <property type="entry name" value="Nitrous oxide reductase, N-terminal domain"/>
    <property type="match status" value="1"/>
</dbReference>
<organism>
    <name type="scientific">Yersinia pseudotuberculosis serotype O:1b (strain IP 31758)</name>
    <dbReference type="NCBI Taxonomy" id="349747"/>
    <lineage>
        <taxon>Bacteria</taxon>
        <taxon>Pseudomonadati</taxon>
        <taxon>Pseudomonadota</taxon>
        <taxon>Gammaproteobacteria</taxon>
        <taxon>Enterobacterales</taxon>
        <taxon>Yersiniaceae</taxon>
        <taxon>Yersinia</taxon>
    </lineage>
</organism>
<proteinExistence type="inferred from homology"/>
<name>6PGL_YERP3</name>
<protein>
    <recommendedName>
        <fullName evidence="1">6-phosphogluconolactonase</fullName>
        <shortName evidence="1">6-P-gluconolactonase</shortName>
        <ecNumber evidence="1">3.1.1.31</ecNumber>
    </recommendedName>
</protein>